<dbReference type="EMBL" id="AP006344">
    <property type="protein sequence ID" value="BAC84792.1"/>
    <property type="molecule type" value="Genomic_DNA"/>
</dbReference>
<dbReference type="EMBL" id="AP014963">
    <property type="status" value="NOT_ANNOTATED_CDS"/>
    <property type="molecule type" value="Genomic_DNA"/>
</dbReference>
<dbReference type="SMR" id="Q0D744"/>
<dbReference type="FunCoup" id="Q0D744">
    <property type="interactions" value="2197"/>
</dbReference>
<dbReference type="STRING" id="39947.Q0D744"/>
<dbReference type="PaxDb" id="39947-Q0D744"/>
<dbReference type="InParanoid" id="Q0D744"/>
<dbReference type="Proteomes" id="UP000000763">
    <property type="component" value="Chromosome 7"/>
</dbReference>
<dbReference type="Proteomes" id="UP000059680">
    <property type="component" value="Chromosome 7"/>
</dbReference>
<dbReference type="GO" id="GO:0015629">
    <property type="term" value="C:actin cytoskeleton"/>
    <property type="evidence" value="ECO:0000318"/>
    <property type="project" value="GO_Central"/>
</dbReference>
<dbReference type="GO" id="GO:0005737">
    <property type="term" value="C:cytoplasm"/>
    <property type="evidence" value="ECO:0000318"/>
    <property type="project" value="GO_Central"/>
</dbReference>
<dbReference type="GO" id="GO:0051015">
    <property type="term" value="F:actin filament binding"/>
    <property type="evidence" value="ECO:0000318"/>
    <property type="project" value="GO_Central"/>
</dbReference>
<dbReference type="GO" id="GO:0030042">
    <property type="term" value="P:actin filament depolymerization"/>
    <property type="evidence" value="ECO:0000318"/>
    <property type="project" value="GO_Central"/>
</dbReference>
<dbReference type="CDD" id="cd11286">
    <property type="entry name" value="ADF_cofilin_like"/>
    <property type="match status" value="1"/>
</dbReference>
<dbReference type="Gene3D" id="3.40.20.10">
    <property type="entry name" value="Severin"/>
    <property type="match status" value="1"/>
</dbReference>
<dbReference type="InterPro" id="IPR002108">
    <property type="entry name" value="ADF-H"/>
</dbReference>
<dbReference type="InterPro" id="IPR029006">
    <property type="entry name" value="ADF-H/Gelsolin-like_dom_sf"/>
</dbReference>
<dbReference type="InterPro" id="IPR017904">
    <property type="entry name" value="ADF/Cofilin"/>
</dbReference>
<dbReference type="PANTHER" id="PTHR11913">
    <property type="entry name" value="COFILIN-RELATED"/>
    <property type="match status" value="1"/>
</dbReference>
<dbReference type="Pfam" id="PF00241">
    <property type="entry name" value="Cofilin_ADF"/>
    <property type="match status" value="1"/>
</dbReference>
<dbReference type="SMART" id="SM00102">
    <property type="entry name" value="ADF"/>
    <property type="match status" value="1"/>
</dbReference>
<dbReference type="SUPFAM" id="SSF55753">
    <property type="entry name" value="Actin depolymerizing proteins"/>
    <property type="match status" value="1"/>
</dbReference>
<dbReference type="PROSITE" id="PS51263">
    <property type="entry name" value="ADF_H"/>
    <property type="match status" value="1"/>
</dbReference>
<organism>
    <name type="scientific">Oryza sativa subsp. japonica</name>
    <name type="common">Rice</name>
    <dbReference type="NCBI Taxonomy" id="39947"/>
    <lineage>
        <taxon>Eukaryota</taxon>
        <taxon>Viridiplantae</taxon>
        <taxon>Streptophyta</taxon>
        <taxon>Embryophyta</taxon>
        <taxon>Tracheophyta</taxon>
        <taxon>Spermatophyta</taxon>
        <taxon>Magnoliopsida</taxon>
        <taxon>Liliopsida</taxon>
        <taxon>Poales</taxon>
        <taxon>Poaceae</taxon>
        <taxon>BOP clade</taxon>
        <taxon>Oryzoideae</taxon>
        <taxon>Oryzeae</taxon>
        <taxon>Oryzinae</taxon>
        <taxon>Oryza</taxon>
        <taxon>Oryza sativa</taxon>
    </lineage>
</organism>
<evidence type="ECO:0000250" key="1"/>
<evidence type="ECO:0000255" key="2">
    <source>
        <dbReference type="PROSITE-ProRule" id="PRU00599"/>
    </source>
</evidence>
<evidence type="ECO:0000305" key="3"/>
<proteinExistence type="inferred from homology"/>
<comment type="function">
    <text evidence="1">Actin-depolymerizing protein. Severs actin filaments (F-actin) and binds to actin monomers (By similarity).</text>
</comment>
<comment type="similarity">
    <text evidence="3">Belongs to the actin-binding proteins ADF family.</text>
</comment>
<feature type="chain" id="PRO_0000278111" description="Putative actin-depolymerizing factor 8">
    <location>
        <begin position="1"/>
        <end position="146"/>
    </location>
</feature>
<feature type="domain" description="ADF-H" evidence="2">
    <location>
        <begin position="14"/>
        <end position="144"/>
    </location>
</feature>
<accession>Q0D744</accession>
<accession>Q6YSU8</accession>
<reference key="1">
    <citation type="journal article" date="2005" name="Nature">
        <title>The map-based sequence of the rice genome.</title>
        <authorList>
            <consortium name="International rice genome sequencing project (IRGSP)"/>
        </authorList>
    </citation>
    <scope>NUCLEOTIDE SEQUENCE [LARGE SCALE GENOMIC DNA]</scope>
    <source>
        <strain>cv. Nipponbare</strain>
    </source>
</reference>
<reference key="2">
    <citation type="journal article" date="2013" name="Rice">
        <title>Improvement of the Oryza sativa Nipponbare reference genome using next generation sequence and optical map data.</title>
        <authorList>
            <person name="Kawahara Y."/>
            <person name="de la Bastide M."/>
            <person name="Hamilton J.P."/>
            <person name="Kanamori H."/>
            <person name="McCombie W.R."/>
            <person name="Ouyang S."/>
            <person name="Schwartz D.C."/>
            <person name="Tanaka T."/>
            <person name="Wu J."/>
            <person name="Zhou S."/>
            <person name="Childs K.L."/>
            <person name="Davidson R.M."/>
            <person name="Lin H."/>
            <person name="Quesada-Ocampo L."/>
            <person name="Vaillancourt B."/>
            <person name="Sakai H."/>
            <person name="Lee S.S."/>
            <person name="Kim J."/>
            <person name="Numa H."/>
            <person name="Itoh T."/>
            <person name="Buell C.R."/>
            <person name="Matsumoto T."/>
        </authorList>
    </citation>
    <scope>GENOME REANNOTATION</scope>
    <source>
        <strain>cv. Nipponbare</strain>
    </source>
</reference>
<reference key="3">
    <citation type="journal article" date="2006" name="J. Plant Physiol.">
        <title>Comparative study of rice and Arabidopsis actin-depolymerizing factors gene families.</title>
        <authorList>
            <person name="Feng Y."/>
            <person name="Liu Q."/>
            <person name="Xue Q."/>
        </authorList>
    </citation>
    <scope>GENE FAMILY</scope>
</reference>
<keyword id="KW-0009">Actin-binding</keyword>
<keyword id="KW-1185">Reference proteome</keyword>
<sequence length="146" mass="16983">MEILGFTVMGGGSPAWIEVPEKSKSAFWELMRRKVHRYVIFKIDDRREEIVVEKTGAPWESYDDFTASLPADAVYDLDFVSDDNCRKSKIFFISWSPSLSCIRAKTIYAVWRNQFRHELDGVHFEIQATDPDDMDLEVLRGRANRT</sequence>
<gene>
    <name type="primary">ADF8</name>
    <name type="ordered locus">Os07g0297500</name>
    <name type="ordered locus">LOC_Os07g20170</name>
    <name type="ORF">P0680C01.12</name>
</gene>
<name>ADF8_ORYSJ</name>
<protein>
    <recommendedName>
        <fullName>Putative actin-depolymerizing factor 8</fullName>
        <shortName>ADF-8</shortName>
        <shortName>OsADF8</shortName>
    </recommendedName>
</protein>